<comment type="function">
    <text evidence="3 4">May play a role in neurogenesis. May promote matrix mineralization (PubMed:22209847), but has been shown to weakly, but significantly inhibit BMP2 and BMP6 activity in a preosteoblastic cell line (PubMed:19852960).</text>
</comment>
<comment type="subunit">
    <text evidence="5">Peripherally associated with AMPAR complex. AMPAR complex consists of an inner core made of 4 pore-forming GluA/GRIA proteins (GRIA1, GRIA2, GRIA3 and GRIA4) and 4 major auxiliary subunits arranged in a twofold symmetry. One of the two pairs of distinct binding sites is occupied either by CNIH2, CNIH3 or CACNG2, CACNG3. The other harbors CACNG2, CACNG3, CACNG4, CACNG8 or GSG1L. This inner core of AMPAR complex is complemented by outer core constituents binding directly to the GluA/GRIA proteins at sites distinct from the interaction sites of the inner core constituents. Outer core constituents include at least PRRT1, PRRT2, CKAMP44/SHISA9, FRRS1L and NRN1. The proteins of the inner and outer core serve as a platform for other, more peripherally associated AMPAR constituents, including VWC2L. Alone or in combination, these auxiliary subunits control the gating and pharmacology of the AMPAR complex and profoundly impact their biogenesis and protein processing.</text>
</comment>
<comment type="subcellular location">
    <subcellularLocation>
        <location>Secreted</location>
    </subcellularLocation>
    <subcellularLocation>
        <location evidence="8">Synapse</location>
    </subcellularLocation>
</comment>
<comment type="alternative products">
    <event type="alternative splicing"/>
    <isoform>
        <id>Q505H4-1</id>
        <name>1</name>
        <name>F12-a</name>
        <name>Vwc2l-1</name>
        <sequence type="displayed"/>
    </isoform>
    <isoform>
        <id>Q505H4-2</id>
        <name>2</name>
        <sequence type="described" ref="VSP_035091"/>
    </isoform>
    <isoform>
        <id>Q505H4-3</id>
        <name>3</name>
        <sequence type="described" ref="VSP_035090 VSP_035092 VSP_035093"/>
    </isoform>
    <isoform>
        <id>Q505H4-4</id>
        <name>4</name>
        <name>F12-b</name>
        <name>Vwc2l-2</name>
        <sequence type="described" ref="VSP_044591 VSP_044592"/>
    </isoform>
    <isoform>
        <id>Q505H4-5</id>
        <name>5</name>
        <name>F12-c</name>
        <name>Vwc2l-3</name>
        <sequence type="described" ref="VSP_035091 VSP_044591 VSP_044592"/>
    </isoform>
</comment>
<comment type="tissue specificity">
    <text evidence="3 4 5">Predominantly expressed in the brain (at protein level). Also detected in bones, including femur and calvaria, heart, lung and kidney. Isoform 5 is predominant in lung and heart, compared to isoforms 1 and 3. Isoform 4 is expressed in femur and calvaria at higher levels than isoforms 1 and 5. Isoforms 1 and 4 are expressed at higher levels than isoform 5 in kidney and brain.</text>
</comment>
<comment type="developmental stage">
    <text evidence="3 4">From 12.5 dpc to 18.5 dpc, expressed in the developing neural tissues, including several discrete regions in the forebrain, midbrain and hindbrain, as well as in the spinal cord. May be up-regulated in the course of preosteblast differentiation and matrix mineralization.</text>
</comment>
<name>VWC2L_MOUSE</name>
<reference key="1">
    <citation type="journal article" date="2009" name="FEBS Lett.">
        <title>A novel neural-specific BMP antagonist, Brorin-like, of the Chordin family.</title>
        <authorList>
            <person name="Miwa H."/>
            <person name="Miyake A."/>
            <person name="Kouta Y."/>
            <person name="Shimada A."/>
            <person name="Yamashita Y."/>
            <person name="Nakayama Y."/>
            <person name="Yamauchi H."/>
            <person name="Konishi M."/>
            <person name="Itoh N."/>
        </authorList>
    </citation>
    <scope>NUCLEOTIDE SEQUENCE [MRNA] (ISOFORM 1)</scope>
    <scope>FUNCTION</scope>
    <scope>SUBCELLULAR LOCATION</scope>
    <scope>TISSUE SPECIFICITY</scope>
    <scope>DEVELOPMENTAL STAGE</scope>
</reference>
<reference key="2">
    <citation type="journal article" date="2012" name="Biochem. Biophys. Res. Commun.">
        <title>Modulation of matrix mineralization by Vwc2-like protein and its novel splicing isoforms.</title>
        <authorList>
            <person name="Ohyama Y."/>
            <person name="Katafuchi M."/>
            <person name="Almehmadi A."/>
            <person name="Venkitapathi S."/>
            <person name="Jaha H."/>
            <person name="Ehrenman J."/>
            <person name="Morcos J."/>
            <person name="Aljamaan R."/>
            <person name="Mochida Y."/>
        </authorList>
    </citation>
    <scope>NUCLEOTIDE SEQUENCE [MRNA] (ISOFORMS 1; 4 AND 5)</scope>
    <scope>FUNCTION</scope>
    <scope>SUBCELLULAR LOCATION</scope>
    <scope>TISSUE SPECIFICITY</scope>
    <scope>DEVELOPMENTAL STAGE</scope>
    <source>
        <strain>BALB/cJ</strain>
        <tissue>Brain</tissue>
    </source>
</reference>
<reference key="3">
    <citation type="journal article" date="2005" name="Science">
        <title>The transcriptional landscape of the mammalian genome.</title>
        <authorList>
            <person name="Carninci P."/>
            <person name="Kasukawa T."/>
            <person name="Katayama S."/>
            <person name="Gough J."/>
            <person name="Frith M.C."/>
            <person name="Maeda N."/>
            <person name="Oyama R."/>
            <person name="Ravasi T."/>
            <person name="Lenhard B."/>
            <person name="Wells C."/>
            <person name="Kodzius R."/>
            <person name="Shimokawa K."/>
            <person name="Bajic V.B."/>
            <person name="Brenner S.E."/>
            <person name="Batalov S."/>
            <person name="Forrest A.R."/>
            <person name="Zavolan M."/>
            <person name="Davis M.J."/>
            <person name="Wilming L.G."/>
            <person name="Aidinis V."/>
            <person name="Allen J.E."/>
            <person name="Ambesi-Impiombato A."/>
            <person name="Apweiler R."/>
            <person name="Aturaliya R.N."/>
            <person name="Bailey T.L."/>
            <person name="Bansal M."/>
            <person name="Baxter L."/>
            <person name="Beisel K.W."/>
            <person name="Bersano T."/>
            <person name="Bono H."/>
            <person name="Chalk A.M."/>
            <person name="Chiu K.P."/>
            <person name="Choudhary V."/>
            <person name="Christoffels A."/>
            <person name="Clutterbuck D.R."/>
            <person name="Crowe M.L."/>
            <person name="Dalla E."/>
            <person name="Dalrymple B.P."/>
            <person name="de Bono B."/>
            <person name="Della Gatta G."/>
            <person name="di Bernardo D."/>
            <person name="Down T."/>
            <person name="Engstrom P."/>
            <person name="Fagiolini M."/>
            <person name="Faulkner G."/>
            <person name="Fletcher C.F."/>
            <person name="Fukushima T."/>
            <person name="Furuno M."/>
            <person name="Futaki S."/>
            <person name="Gariboldi M."/>
            <person name="Georgii-Hemming P."/>
            <person name="Gingeras T.R."/>
            <person name="Gojobori T."/>
            <person name="Green R.E."/>
            <person name="Gustincich S."/>
            <person name="Harbers M."/>
            <person name="Hayashi Y."/>
            <person name="Hensch T.K."/>
            <person name="Hirokawa N."/>
            <person name="Hill D."/>
            <person name="Huminiecki L."/>
            <person name="Iacono M."/>
            <person name="Ikeo K."/>
            <person name="Iwama A."/>
            <person name="Ishikawa T."/>
            <person name="Jakt M."/>
            <person name="Kanapin A."/>
            <person name="Katoh M."/>
            <person name="Kawasawa Y."/>
            <person name="Kelso J."/>
            <person name="Kitamura H."/>
            <person name="Kitano H."/>
            <person name="Kollias G."/>
            <person name="Krishnan S.P."/>
            <person name="Kruger A."/>
            <person name="Kummerfeld S.K."/>
            <person name="Kurochkin I.V."/>
            <person name="Lareau L.F."/>
            <person name="Lazarevic D."/>
            <person name="Lipovich L."/>
            <person name="Liu J."/>
            <person name="Liuni S."/>
            <person name="McWilliam S."/>
            <person name="Madan Babu M."/>
            <person name="Madera M."/>
            <person name="Marchionni L."/>
            <person name="Matsuda H."/>
            <person name="Matsuzawa S."/>
            <person name="Miki H."/>
            <person name="Mignone F."/>
            <person name="Miyake S."/>
            <person name="Morris K."/>
            <person name="Mottagui-Tabar S."/>
            <person name="Mulder N."/>
            <person name="Nakano N."/>
            <person name="Nakauchi H."/>
            <person name="Ng P."/>
            <person name="Nilsson R."/>
            <person name="Nishiguchi S."/>
            <person name="Nishikawa S."/>
            <person name="Nori F."/>
            <person name="Ohara O."/>
            <person name="Okazaki Y."/>
            <person name="Orlando V."/>
            <person name="Pang K.C."/>
            <person name="Pavan W.J."/>
            <person name="Pavesi G."/>
            <person name="Pesole G."/>
            <person name="Petrovsky N."/>
            <person name="Piazza S."/>
            <person name="Reed J."/>
            <person name="Reid J.F."/>
            <person name="Ring B.Z."/>
            <person name="Ringwald M."/>
            <person name="Rost B."/>
            <person name="Ruan Y."/>
            <person name="Salzberg S.L."/>
            <person name="Sandelin A."/>
            <person name="Schneider C."/>
            <person name="Schoenbach C."/>
            <person name="Sekiguchi K."/>
            <person name="Semple C.A."/>
            <person name="Seno S."/>
            <person name="Sessa L."/>
            <person name="Sheng Y."/>
            <person name="Shibata Y."/>
            <person name="Shimada H."/>
            <person name="Shimada K."/>
            <person name="Silva D."/>
            <person name="Sinclair B."/>
            <person name="Sperling S."/>
            <person name="Stupka E."/>
            <person name="Sugiura K."/>
            <person name="Sultana R."/>
            <person name="Takenaka Y."/>
            <person name="Taki K."/>
            <person name="Tammoja K."/>
            <person name="Tan S.L."/>
            <person name="Tang S."/>
            <person name="Taylor M.S."/>
            <person name="Tegner J."/>
            <person name="Teichmann S.A."/>
            <person name="Ueda H.R."/>
            <person name="van Nimwegen E."/>
            <person name="Verardo R."/>
            <person name="Wei C.L."/>
            <person name="Yagi K."/>
            <person name="Yamanishi H."/>
            <person name="Zabarovsky E."/>
            <person name="Zhu S."/>
            <person name="Zimmer A."/>
            <person name="Hide W."/>
            <person name="Bult C."/>
            <person name="Grimmond S.M."/>
            <person name="Teasdale R.D."/>
            <person name="Liu E.T."/>
            <person name="Brusic V."/>
            <person name="Quackenbush J."/>
            <person name="Wahlestedt C."/>
            <person name="Mattick J.S."/>
            <person name="Hume D.A."/>
            <person name="Kai C."/>
            <person name="Sasaki D."/>
            <person name="Tomaru Y."/>
            <person name="Fukuda S."/>
            <person name="Kanamori-Katayama M."/>
            <person name="Suzuki M."/>
            <person name="Aoki J."/>
            <person name="Arakawa T."/>
            <person name="Iida J."/>
            <person name="Imamura K."/>
            <person name="Itoh M."/>
            <person name="Kato T."/>
            <person name="Kawaji H."/>
            <person name="Kawagashira N."/>
            <person name="Kawashima T."/>
            <person name="Kojima M."/>
            <person name="Kondo S."/>
            <person name="Konno H."/>
            <person name="Nakano K."/>
            <person name="Ninomiya N."/>
            <person name="Nishio T."/>
            <person name="Okada M."/>
            <person name="Plessy C."/>
            <person name="Shibata K."/>
            <person name="Shiraki T."/>
            <person name="Suzuki S."/>
            <person name="Tagami M."/>
            <person name="Waki K."/>
            <person name="Watahiki A."/>
            <person name="Okamura-Oho Y."/>
            <person name="Suzuki H."/>
            <person name="Kawai J."/>
            <person name="Hayashizaki Y."/>
        </authorList>
    </citation>
    <scope>NUCLEOTIDE SEQUENCE [LARGE SCALE MRNA] (ISOFORMS 2 AND 3)</scope>
    <source>
        <strain>C57BL/6J</strain>
        <tissue>Brain cortex</tissue>
        <tissue>Spinal ganglion</tissue>
    </source>
</reference>
<reference key="4">
    <citation type="journal article" date="2009" name="PLoS Biol.">
        <title>Lineage-specific biology revealed by a finished genome assembly of the mouse.</title>
        <authorList>
            <person name="Church D.M."/>
            <person name="Goodstadt L."/>
            <person name="Hillier L.W."/>
            <person name="Zody M.C."/>
            <person name="Goldstein S."/>
            <person name="She X."/>
            <person name="Bult C.J."/>
            <person name="Agarwala R."/>
            <person name="Cherry J.L."/>
            <person name="DiCuccio M."/>
            <person name="Hlavina W."/>
            <person name="Kapustin Y."/>
            <person name="Meric P."/>
            <person name="Maglott D."/>
            <person name="Birtle Z."/>
            <person name="Marques A.C."/>
            <person name="Graves T."/>
            <person name="Zhou S."/>
            <person name="Teague B."/>
            <person name="Potamousis K."/>
            <person name="Churas C."/>
            <person name="Place M."/>
            <person name="Herschleb J."/>
            <person name="Runnheim R."/>
            <person name="Forrest D."/>
            <person name="Amos-Landgraf J."/>
            <person name="Schwartz D.C."/>
            <person name="Cheng Z."/>
            <person name="Lindblad-Toh K."/>
            <person name="Eichler E.E."/>
            <person name="Ponting C.P."/>
        </authorList>
    </citation>
    <scope>NUCLEOTIDE SEQUENCE [LARGE SCALE GENOMIC DNA]</scope>
    <source>
        <strain>C57BL/6J</strain>
    </source>
</reference>
<reference key="5">
    <citation type="journal article" date="2004" name="Genome Res.">
        <title>The status, quality, and expansion of the NIH full-length cDNA project: the Mammalian Gene Collection (MGC).</title>
        <authorList>
            <consortium name="The MGC Project Team"/>
        </authorList>
    </citation>
    <scope>NUCLEOTIDE SEQUENCE [LARGE SCALE MRNA] (ISOFORM 1)</scope>
    <source>
        <strain>C57BL/6J</strain>
        <tissue>Brain</tissue>
    </source>
</reference>
<reference key="6">
    <citation type="journal article" date="2012" name="Neuron">
        <title>High-resolution proteomics unravel architecture and molecular diversity of native AMPA receptor complexes.</title>
        <authorList>
            <person name="Schwenk J."/>
            <person name="Harmel N."/>
            <person name="Brechet A."/>
            <person name="Zolles G."/>
            <person name="Berkefeld H."/>
            <person name="Muller C.S."/>
            <person name="Bildl W."/>
            <person name="Baehrens D."/>
            <person name="Huber B."/>
            <person name="Kulik A."/>
            <person name="Klocker N."/>
            <person name="Schulte U."/>
            <person name="Fakler B."/>
        </authorList>
    </citation>
    <scope>IDENTIFICATION IN AMPAR COMPLEX</scope>
    <scope>SUBCELLULAR LOCATION</scope>
    <scope>TISSUE SPECIFICITY</scope>
</reference>
<proteinExistence type="evidence at protein level"/>
<protein>
    <recommendedName>
        <fullName>von Willebrand factor C domain-containing protein 2-like</fullName>
    </recommendedName>
    <alternativeName>
        <fullName>Brorin-like</fullName>
    </alternativeName>
</protein>
<organism>
    <name type="scientific">Mus musculus</name>
    <name type="common">Mouse</name>
    <dbReference type="NCBI Taxonomy" id="10090"/>
    <lineage>
        <taxon>Eukaryota</taxon>
        <taxon>Metazoa</taxon>
        <taxon>Chordata</taxon>
        <taxon>Craniata</taxon>
        <taxon>Vertebrata</taxon>
        <taxon>Euteleostomi</taxon>
        <taxon>Mammalia</taxon>
        <taxon>Eutheria</taxon>
        <taxon>Euarchontoglires</taxon>
        <taxon>Glires</taxon>
        <taxon>Rodentia</taxon>
        <taxon>Myomorpha</taxon>
        <taxon>Muroidea</taxon>
        <taxon>Muridae</taxon>
        <taxon>Murinae</taxon>
        <taxon>Mus</taxon>
        <taxon>Mus</taxon>
    </lineage>
</organism>
<keyword id="KW-0025">Alternative splicing</keyword>
<keyword id="KW-0217">Developmental protein</keyword>
<keyword id="KW-1185">Reference proteome</keyword>
<keyword id="KW-0677">Repeat</keyword>
<keyword id="KW-0964">Secreted</keyword>
<keyword id="KW-0732">Signal</keyword>
<keyword id="KW-0770">Synapse</keyword>
<dbReference type="EMBL" id="AB374230">
    <property type="protein sequence ID" value="BAH04175.1"/>
    <property type="molecule type" value="mRNA"/>
</dbReference>
<dbReference type="EMBL" id="EF552208">
    <property type="protein sequence ID" value="ABU41138.1"/>
    <property type="molecule type" value="mRNA"/>
</dbReference>
<dbReference type="EMBL" id="EF552209">
    <property type="protein sequence ID" value="ABU41139.1"/>
    <property type="molecule type" value="mRNA"/>
</dbReference>
<dbReference type="EMBL" id="EF552210">
    <property type="protein sequence ID" value="ABU41140.1"/>
    <property type="molecule type" value="mRNA"/>
</dbReference>
<dbReference type="EMBL" id="AK080585">
    <property type="protein sequence ID" value="BAC37948.1"/>
    <property type="molecule type" value="mRNA"/>
</dbReference>
<dbReference type="EMBL" id="AK083856">
    <property type="protein sequence ID" value="BAC39040.1"/>
    <property type="molecule type" value="mRNA"/>
</dbReference>
<dbReference type="EMBL" id="AC129933">
    <property type="status" value="NOT_ANNOTATED_CDS"/>
    <property type="molecule type" value="Genomic_DNA"/>
</dbReference>
<dbReference type="EMBL" id="AC130481">
    <property type="status" value="NOT_ANNOTATED_CDS"/>
    <property type="molecule type" value="Genomic_DNA"/>
</dbReference>
<dbReference type="EMBL" id="BC094541">
    <property type="protein sequence ID" value="AAH94541.1"/>
    <property type="molecule type" value="mRNA"/>
</dbReference>
<dbReference type="CCDS" id="CCDS15028.1">
    <molecule id="Q505H4-1"/>
</dbReference>
<dbReference type="CCDS" id="CCDS78606.1">
    <molecule id="Q505H4-4"/>
</dbReference>
<dbReference type="RefSeq" id="NP_001297587.1">
    <molecule id="Q505H4-4"/>
    <property type="nucleotide sequence ID" value="NM_001310658.2"/>
</dbReference>
<dbReference type="RefSeq" id="NP_796138.2">
    <molecule id="Q505H4-1"/>
    <property type="nucleotide sequence ID" value="NM_177164.4"/>
</dbReference>
<dbReference type="RefSeq" id="XP_006496126.1">
    <molecule id="Q505H4-1"/>
    <property type="nucleotide sequence ID" value="XM_006496063.5"/>
</dbReference>
<dbReference type="SMR" id="Q505H4"/>
<dbReference type="FunCoup" id="Q505H4">
    <property type="interactions" value="47"/>
</dbReference>
<dbReference type="STRING" id="10090.ENSMUSP00000058142"/>
<dbReference type="PhosphoSitePlus" id="Q505H4"/>
<dbReference type="PaxDb" id="10090-ENSMUSP00000058142"/>
<dbReference type="ProteomicsDB" id="299735">
    <molecule id="Q505H4-1"/>
</dbReference>
<dbReference type="ProteomicsDB" id="299736">
    <molecule id="Q505H4-2"/>
</dbReference>
<dbReference type="ProteomicsDB" id="299737">
    <molecule id="Q505H4-3"/>
</dbReference>
<dbReference type="ProteomicsDB" id="299738">
    <molecule id="Q505H4-4"/>
</dbReference>
<dbReference type="Antibodypedia" id="52490">
    <property type="antibodies" value="13 antibodies from 7 providers"/>
</dbReference>
<dbReference type="DNASU" id="320460"/>
<dbReference type="Ensembl" id="ENSMUST00000053922.12">
    <molecule id="Q505H4-1"/>
    <property type="protein sequence ID" value="ENSMUSP00000058142.6"/>
    <property type="gene ID" value="ENSMUSG00000045648.16"/>
</dbReference>
<dbReference type="Ensembl" id="ENSMUST00000161937.2">
    <molecule id="Q505H4-4"/>
    <property type="protein sequence ID" value="ENSMUSP00000125014.2"/>
    <property type="gene ID" value="ENSMUSG00000045648.16"/>
</dbReference>
<dbReference type="Ensembl" id="ENSMUST00000162182.2">
    <molecule id="Q505H4-2"/>
    <property type="protein sequence ID" value="ENSMUSP00000123819.2"/>
    <property type="gene ID" value="ENSMUSG00000045648.16"/>
</dbReference>
<dbReference type="GeneID" id="320460"/>
<dbReference type="KEGG" id="mmu:320460"/>
<dbReference type="UCSC" id="uc007bjj.1">
    <molecule id="Q505H4-4"/>
    <property type="organism name" value="mouse"/>
</dbReference>
<dbReference type="UCSC" id="uc007bjk.1">
    <molecule id="Q505H4-1"/>
    <property type="organism name" value="mouse"/>
</dbReference>
<dbReference type="UCSC" id="uc011wmo.1">
    <molecule id="Q505H4-2"/>
    <property type="organism name" value="mouse"/>
</dbReference>
<dbReference type="UCSC" id="uc011wmp.1">
    <molecule id="Q505H4-5"/>
    <property type="organism name" value="mouse"/>
</dbReference>
<dbReference type="AGR" id="MGI:2444069"/>
<dbReference type="CTD" id="402117"/>
<dbReference type="MGI" id="MGI:2444069">
    <property type="gene designation" value="Vwc2l"/>
</dbReference>
<dbReference type="VEuPathDB" id="HostDB:ENSMUSG00000045648"/>
<dbReference type="eggNOG" id="ENOG502RAAU">
    <property type="taxonomic scope" value="Eukaryota"/>
</dbReference>
<dbReference type="GeneTree" id="ENSGT00720000108792"/>
<dbReference type="HOGENOM" id="CLU_100254_2_0_1"/>
<dbReference type="InParanoid" id="Q505H4"/>
<dbReference type="OMA" id="PICKHGP"/>
<dbReference type="OrthoDB" id="8574072at2759"/>
<dbReference type="PhylomeDB" id="Q505H4"/>
<dbReference type="TreeFam" id="TF329913"/>
<dbReference type="BioGRID-ORCS" id="320460">
    <property type="hits" value="0 hits in 77 CRISPR screens"/>
</dbReference>
<dbReference type="ChiTaRS" id="Vwc2l">
    <property type="organism name" value="mouse"/>
</dbReference>
<dbReference type="PRO" id="PR:Q505H4"/>
<dbReference type="Proteomes" id="UP000000589">
    <property type="component" value="Chromosome 1"/>
</dbReference>
<dbReference type="RNAct" id="Q505H4">
    <property type="molecule type" value="protein"/>
</dbReference>
<dbReference type="Bgee" id="ENSMUSG00000045648">
    <property type="expression patterns" value="Expressed in substantia nigra and 40 other cell types or tissues"/>
</dbReference>
<dbReference type="GO" id="GO:0032281">
    <property type="term" value="C:AMPA glutamate receptor complex"/>
    <property type="evidence" value="ECO:0000314"/>
    <property type="project" value="MGI"/>
</dbReference>
<dbReference type="GO" id="GO:0005615">
    <property type="term" value="C:extracellular space"/>
    <property type="evidence" value="ECO:0000314"/>
    <property type="project" value="MGI"/>
</dbReference>
<dbReference type="GO" id="GO:0045202">
    <property type="term" value="C:synapse"/>
    <property type="evidence" value="ECO:0007669"/>
    <property type="project" value="UniProtKB-SubCell"/>
</dbReference>
<dbReference type="GO" id="GO:0030514">
    <property type="term" value="P:negative regulation of BMP signaling pathway"/>
    <property type="evidence" value="ECO:0000316"/>
    <property type="project" value="MGI"/>
</dbReference>
<dbReference type="GO" id="GO:0045666">
    <property type="term" value="P:positive regulation of neuron differentiation"/>
    <property type="evidence" value="ECO:0000314"/>
    <property type="project" value="MGI"/>
</dbReference>
<dbReference type="Gene3D" id="6.20.200.20">
    <property type="match status" value="1"/>
</dbReference>
<dbReference type="InterPro" id="IPR042979">
    <property type="entry name" value="VWC2/VWC2L"/>
</dbReference>
<dbReference type="InterPro" id="IPR001007">
    <property type="entry name" value="VWF_dom"/>
</dbReference>
<dbReference type="PANTHER" id="PTHR46252">
    <property type="entry name" value="BRORIN FAMILY MEMBER"/>
    <property type="match status" value="1"/>
</dbReference>
<dbReference type="PANTHER" id="PTHR46252:SF2">
    <property type="entry name" value="VON WILLEBRAND FACTOR C DOMAIN-CONTAINING PROTEIN 2-LIKE"/>
    <property type="match status" value="1"/>
</dbReference>
<dbReference type="Pfam" id="PF23333">
    <property type="entry name" value="VWC2L_1st"/>
    <property type="match status" value="1"/>
</dbReference>
<dbReference type="Pfam" id="PF23334">
    <property type="entry name" value="VWC2L_2nd"/>
    <property type="match status" value="1"/>
</dbReference>
<dbReference type="Pfam" id="PF23331">
    <property type="entry name" value="VWC2L_C"/>
    <property type="match status" value="1"/>
</dbReference>
<dbReference type="SMART" id="SM00214">
    <property type="entry name" value="VWC"/>
    <property type="match status" value="2"/>
</dbReference>
<dbReference type="SUPFAM" id="SSF57603">
    <property type="entry name" value="FnI-like domain"/>
    <property type="match status" value="1"/>
</dbReference>
<dbReference type="PROSITE" id="PS01208">
    <property type="entry name" value="VWFC_1"/>
    <property type="match status" value="1"/>
</dbReference>
<dbReference type="PROSITE" id="PS50184">
    <property type="entry name" value="VWFC_2"/>
    <property type="match status" value="1"/>
</dbReference>
<feature type="signal peptide" evidence="1">
    <location>
        <begin position="1"/>
        <end position="21"/>
    </location>
</feature>
<feature type="chain" id="PRO_0000348062" description="von Willebrand factor C domain-containing protein 2-like">
    <location>
        <begin position="22"/>
        <end position="222"/>
    </location>
</feature>
<feature type="domain" description="VWFC 1" evidence="2">
    <location>
        <begin position="51"/>
        <end position="110"/>
    </location>
</feature>
<feature type="domain" description="VWFC 2" evidence="2">
    <location>
        <begin position="114"/>
        <end position="172"/>
    </location>
</feature>
<feature type="splice variant" id="VSP_035090" description="In isoform 3." evidence="6">
    <original>MALHIHEACILLLVIPGLVTSAAISHEDYPADEGD</original>
    <variation>MKLAYFYWSSLDWSPLLPSVTKTILLMKVS</variation>
    <location>
        <begin position="1"/>
        <end position="35"/>
    </location>
</feature>
<feature type="splice variant" id="VSP_035091" description="In isoform 2 and isoform 5." evidence="6 7">
    <location>
        <begin position="34"/>
        <end position="80"/>
    </location>
</feature>
<feature type="splice variant" id="VSP_044591" description="In isoform 4 and isoform 5." evidence="7">
    <original>PSPCEWCRC</original>
    <variation>VQTALQELQ</variation>
    <location>
        <begin position="131"/>
        <end position="139"/>
    </location>
</feature>
<feature type="splice variant" id="VSP_035092" description="In isoform 3." evidence="6">
    <original>P</original>
    <variation>V</variation>
    <location>
        <position position="131"/>
    </location>
</feature>
<feature type="splice variant" id="VSP_035093" description="In isoform 3." evidence="6">
    <location>
        <begin position="132"/>
        <end position="222"/>
    </location>
</feature>
<feature type="splice variant" id="VSP_044592" description="In isoform 4 and isoform 5." evidence="7">
    <location>
        <begin position="140"/>
        <end position="222"/>
    </location>
</feature>
<evidence type="ECO:0000255" key="1"/>
<evidence type="ECO:0000255" key="2">
    <source>
        <dbReference type="PROSITE-ProRule" id="PRU00220"/>
    </source>
</evidence>
<evidence type="ECO:0000269" key="3">
    <source>
    </source>
</evidence>
<evidence type="ECO:0000269" key="4">
    <source>
    </source>
</evidence>
<evidence type="ECO:0000269" key="5">
    <source>
    </source>
</evidence>
<evidence type="ECO:0000303" key="6">
    <source>
    </source>
</evidence>
<evidence type="ECO:0000303" key="7">
    <source>
    </source>
</evidence>
<evidence type="ECO:0000305" key="8"/>
<accession>Q505H4</accession>
<accession>B7X8X0</accession>
<accession>E0CXU0</accession>
<accession>E6Y2G9</accession>
<accession>Q8BNE9</accession>
<accession>Q8BNU5</accession>
<gene>
    <name type="primary">Vwc2l</name>
</gene>
<sequence>MALHIHEACILLLVIPGLVTSAAISHEDYPADEGDQASSNDNLIFDDYRGKGCVDDSGFVYKLGERFFPGHSNCPCVCALDGPVCDQPECPKIHPKCTKVEHNGCCPECKEVKNFCEYHGKNYKILEEFKPSPCEWCRCEPSNEVHCVVADCAVPECVNPIYEPEQCCPVCKNGPNCFAGTTIIPAGIEVKVDDCNICHCHNGDWWKPAQCSKRECQGKQTV</sequence>